<comment type="function">
    <text evidence="1">Involved in peptide bond synthesis. Stimulates efficient translation and peptide-bond synthesis on native or reconstituted 70S ribosomes in vitro. Probably functions indirectly by altering the affinity of the ribosome for aminoacyl-tRNA, thus increasing their reactivity as acceptors for peptidyl transferase.</text>
</comment>
<comment type="pathway">
    <text evidence="1">Protein biosynthesis; polypeptide chain elongation.</text>
</comment>
<comment type="subcellular location">
    <subcellularLocation>
        <location evidence="1">Cytoplasm</location>
    </subcellularLocation>
</comment>
<comment type="similarity">
    <text evidence="1">Belongs to the elongation factor P family.</text>
</comment>
<accession>C1A9H6</accession>
<gene>
    <name evidence="1" type="primary">efp</name>
    <name type="ordered locus">GAU_2111</name>
</gene>
<name>EFP_GEMAT</name>
<dbReference type="EMBL" id="AP009153">
    <property type="protein sequence ID" value="BAH39153.1"/>
    <property type="molecule type" value="Genomic_DNA"/>
</dbReference>
<dbReference type="RefSeq" id="WP_012683600.1">
    <property type="nucleotide sequence ID" value="NC_012489.1"/>
</dbReference>
<dbReference type="SMR" id="C1A9H6"/>
<dbReference type="STRING" id="379066.GAU_2111"/>
<dbReference type="KEGG" id="gau:GAU_2111"/>
<dbReference type="eggNOG" id="COG0231">
    <property type="taxonomic scope" value="Bacteria"/>
</dbReference>
<dbReference type="HOGENOM" id="CLU_074944_0_1_0"/>
<dbReference type="OrthoDB" id="9801844at2"/>
<dbReference type="UniPathway" id="UPA00345"/>
<dbReference type="Proteomes" id="UP000002209">
    <property type="component" value="Chromosome"/>
</dbReference>
<dbReference type="GO" id="GO:0005737">
    <property type="term" value="C:cytoplasm"/>
    <property type="evidence" value="ECO:0007669"/>
    <property type="project" value="UniProtKB-SubCell"/>
</dbReference>
<dbReference type="GO" id="GO:0003746">
    <property type="term" value="F:translation elongation factor activity"/>
    <property type="evidence" value="ECO:0007669"/>
    <property type="project" value="UniProtKB-UniRule"/>
</dbReference>
<dbReference type="GO" id="GO:0043043">
    <property type="term" value="P:peptide biosynthetic process"/>
    <property type="evidence" value="ECO:0007669"/>
    <property type="project" value="InterPro"/>
</dbReference>
<dbReference type="CDD" id="cd04470">
    <property type="entry name" value="S1_EF-P_repeat_1"/>
    <property type="match status" value="1"/>
</dbReference>
<dbReference type="CDD" id="cd05794">
    <property type="entry name" value="S1_EF-P_repeat_2"/>
    <property type="match status" value="1"/>
</dbReference>
<dbReference type="FunFam" id="2.30.30.30:FF:000003">
    <property type="entry name" value="Elongation factor P"/>
    <property type="match status" value="1"/>
</dbReference>
<dbReference type="FunFam" id="2.40.50.140:FF:000004">
    <property type="entry name" value="Elongation factor P"/>
    <property type="match status" value="1"/>
</dbReference>
<dbReference type="FunFam" id="2.40.50.140:FF:000009">
    <property type="entry name" value="Elongation factor P"/>
    <property type="match status" value="1"/>
</dbReference>
<dbReference type="Gene3D" id="2.30.30.30">
    <property type="match status" value="1"/>
</dbReference>
<dbReference type="Gene3D" id="2.40.50.140">
    <property type="entry name" value="Nucleic acid-binding proteins"/>
    <property type="match status" value="2"/>
</dbReference>
<dbReference type="HAMAP" id="MF_00141">
    <property type="entry name" value="EF_P"/>
    <property type="match status" value="1"/>
</dbReference>
<dbReference type="InterPro" id="IPR015365">
    <property type="entry name" value="Elong-fact-P_C"/>
</dbReference>
<dbReference type="InterPro" id="IPR012340">
    <property type="entry name" value="NA-bd_OB-fold"/>
</dbReference>
<dbReference type="InterPro" id="IPR014722">
    <property type="entry name" value="Rib_uL2_dom2"/>
</dbReference>
<dbReference type="InterPro" id="IPR020599">
    <property type="entry name" value="Transl_elong_fac_P/YeiP"/>
</dbReference>
<dbReference type="InterPro" id="IPR013185">
    <property type="entry name" value="Transl_elong_KOW-like"/>
</dbReference>
<dbReference type="InterPro" id="IPR001059">
    <property type="entry name" value="Transl_elong_P/YeiP_cen"/>
</dbReference>
<dbReference type="InterPro" id="IPR013852">
    <property type="entry name" value="Transl_elong_P/YeiP_CS"/>
</dbReference>
<dbReference type="InterPro" id="IPR011768">
    <property type="entry name" value="Transl_elongation_fac_P"/>
</dbReference>
<dbReference type="InterPro" id="IPR008991">
    <property type="entry name" value="Translation_prot_SH3-like_sf"/>
</dbReference>
<dbReference type="NCBIfam" id="TIGR00038">
    <property type="entry name" value="efp"/>
    <property type="match status" value="1"/>
</dbReference>
<dbReference type="NCBIfam" id="NF001810">
    <property type="entry name" value="PRK00529.1"/>
    <property type="match status" value="1"/>
</dbReference>
<dbReference type="PANTHER" id="PTHR30053">
    <property type="entry name" value="ELONGATION FACTOR P"/>
    <property type="match status" value="1"/>
</dbReference>
<dbReference type="PANTHER" id="PTHR30053:SF14">
    <property type="entry name" value="TRANSLATION ELONGATION FACTOR KOW-LIKE DOMAIN-CONTAINING PROTEIN"/>
    <property type="match status" value="1"/>
</dbReference>
<dbReference type="Pfam" id="PF01132">
    <property type="entry name" value="EFP"/>
    <property type="match status" value="1"/>
</dbReference>
<dbReference type="Pfam" id="PF08207">
    <property type="entry name" value="EFP_N"/>
    <property type="match status" value="1"/>
</dbReference>
<dbReference type="Pfam" id="PF09285">
    <property type="entry name" value="Elong-fact-P_C"/>
    <property type="match status" value="1"/>
</dbReference>
<dbReference type="PIRSF" id="PIRSF005901">
    <property type="entry name" value="EF-P"/>
    <property type="match status" value="1"/>
</dbReference>
<dbReference type="SMART" id="SM01185">
    <property type="entry name" value="EFP"/>
    <property type="match status" value="1"/>
</dbReference>
<dbReference type="SMART" id="SM00841">
    <property type="entry name" value="Elong-fact-P_C"/>
    <property type="match status" value="1"/>
</dbReference>
<dbReference type="SUPFAM" id="SSF50249">
    <property type="entry name" value="Nucleic acid-binding proteins"/>
    <property type="match status" value="2"/>
</dbReference>
<dbReference type="SUPFAM" id="SSF50104">
    <property type="entry name" value="Translation proteins SH3-like domain"/>
    <property type="match status" value="1"/>
</dbReference>
<dbReference type="PROSITE" id="PS01275">
    <property type="entry name" value="EFP"/>
    <property type="match status" value="1"/>
</dbReference>
<organism>
    <name type="scientific">Gemmatimonas aurantiaca (strain DSM 14586 / JCM 11422 / NBRC 100505 / T-27)</name>
    <dbReference type="NCBI Taxonomy" id="379066"/>
    <lineage>
        <taxon>Bacteria</taxon>
        <taxon>Pseudomonadati</taxon>
        <taxon>Gemmatimonadota</taxon>
        <taxon>Gemmatimonadia</taxon>
        <taxon>Gemmatimonadales</taxon>
        <taxon>Gemmatimonadaceae</taxon>
        <taxon>Gemmatimonas</taxon>
    </lineage>
</organism>
<sequence length="188" mass="21135">MAFSATQIRRGMVLVFEGDPCRVIEFRHHTPGNLRAMVQAKLKNLRTGSNFEHRFRAADTIVKADMETHELEFMYQGGDTYHFMNSENYDQLELDDEALGDSAPWMQPGLKILAEYYNGRPIGIQLPNSLVFEIVETAPVVRGATKTASSKPAKLENGVTVNVPEFVEQGTRVRVNPSTGEYLDRAKD</sequence>
<feature type="chain" id="PRO_1000203270" description="Elongation factor P">
    <location>
        <begin position="1"/>
        <end position="188"/>
    </location>
</feature>
<evidence type="ECO:0000255" key="1">
    <source>
        <dbReference type="HAMAP-Rule" id="MF_00141"/>
    </source>
</evidence>
<proteinExistence type="inferred from homology"/>
<reference key="1">
    <citation type="submission" date="2006-03" db="EMBL/GenBank/DDBJ databases">
        <title>Complete genome sequence of Gemmatimonas aurantiaca T-27 that represents a novel phylum Gemmatimonadetes.</title>
        <authorList>
            <person name="Takasaki K."/>
            <person name="Ichikawa N."/>
            <person name="Miura H."/>
            <person name="Matsushita S."/>
            <person name="Watanabe Y."/>
            <person name="Oguchi A."/>
            <person name="Ankai A."/>
            <person name="Yashiro I."/>
            <person name="Takahashi M."/>
            <person name="Terui Y."/>
            <person name="Fukui S."/>
            <person name="Yokoyama H."/>
            <person name="Tanikawa S."/>
            <person name="Hanada S."/>
            <person name="Kamagata Y."/>
            <person name="Fujita N."/>
        </authorList>
    </citation>
    <scope>NUCLEOTIDE SEQUENCE [LARGE SCALE GENOMIC DNA]</scope>
    <source>
        <strain>DSM 14586 / JCM 11422 / NBRC 100505 / T-27</strain>
    </source>
</reference>
<keyword id="KW-0963">Cytoplasm</keyword>
<keyword id="KW-0251">Elongation factor</keyword>
<keyword id="KW-0648">Protein biosynthesis</keyword>
<keyword id="KW-1185">Reference proteome</keyword>
<protein>
    <recommendedName>
        <fullName evidence="1">Elongation factor P</fullName>
        <shortName evidence="1">EF-P</shortName>
    </recommendedName>
</protein>